<sequence length="163" mass="19205">MERADNSNLEMLLETDWQLHQVYTGENIFFVIAKLGWLKTLHTLNVLIDEEIKPWLQQRNKLGDTCIHVAALANRGKQAIQLIEKLVEYGANLNTRRNCNGDTVLDIAVKNKDHELTVWLWKQPSINLQTEKFFHYVMDQMKLKESQENKMEILEAYMMQLFK</sequence>
<keyword id="KW-0040">ANK repeat</keyword>
<keyword id="KW-0945">Host-virus interaction</keyword>
<keyword id="KW-1100">Inhibition of host NF-kappa-B by virus</keyword>
<keyword id="KW-1185">Reference proteome</keyword>
<keyword id="KW-0677">Repeat</keyword>
<feature type="chain" id="PRO_0000405370" description="I-Kappa-B like protein N3">
    <location>
        <begin position="1"/>
        <end position="163"/>
    </location>
</feature>
<feature type="repeat" description="ANK 1">
    <location>
        <begin position="62"/>
        <end position="95"/>
    </location>
</feature>
<feature type="repeat" description="ANK 2">
    <location>
        <begin position="100"/>
        <end position="130"/>
    </location>
</feature>
<proteinExistence type="inferred from homology"/>
<gene>
    <name type="primary">N6</name>
</gene>
<dbReference type="EMBL" id="AY875689">
    <property type="protein sequence ID" value="AAW51805.1"/>
    <property type="molecule type" value="Genomic_DNA"/>
</dbReference>
<dbReference type="RefSeq" id="YP_239403.1">
    <property type="nucleotide sequence ID" value="NC_007039.1"/>
</dbReference>
<dbReference type="SMR" id="Q5I125"/>
<dbReference type="KEGG" id="vg:5075837"/>
<dbReference type="Proteomes" id="UP000008168">
    <property type="component" value="Genome"/>
</dbReference>
<dbReference type="GO" id="GO:0051059">
    <property type="term" value="F:NF-kappaB binding"/>
    <property type="evidence" value="ECO:0007669"/>
    <property type="project" value="TreeGrafter"/>
</dbReference>
<dbReference type="GO" id="GO:0071356">
    <property type="term" value="P:cellular response to tumor necrosis factor"/>
    <property type="evidence" value="ECO:0007669"/>
    <property type="project" value="TreeGrafter"/>
</dbReference>
<dbReference type="GO" id="GO:0085034">
    <property type="term" value="P:symbiont-mediated suppression of host NF-kappaB cascade"/>
    <property type="evidence" value="ECO:0007669"/>
    <property type="project" value="UniProtKB-KW"/>
</dbReference>
<dbReference type="Gene3D" id="1.25.40.20">
    <property type="entry name" value="Ankyrin repeat-containing domain"/>
    <property type="match status" value="1"/>
</dbReference>
<dbReference type="InterPro" id="IPR002110">
    <property type="entry name" value="Ankyrin_rpt"/>
</dbReference>
<dbReference type="InterPro" id="IPR036770">
    <property type="entry name" value="Ankyrin_rpt-contain_sf"/>
</dbReference>
<dbReference type="InterPro" id="IPR051070">
    <property type="entry name" value="NF-kappa-B_inhibitor"/>
</dbReference>
<dbReference type="PANTHER" id="PTHR46680">
    <property type="entry name" value="NF-KAPPA-B INHIBITOR ALPHA"/>
    <property type="match status" value="1"/>
</dbReference>
<dbReference type="PANTHER" id="PTHR46680:SF5">
    <property type="entry name" value="NFKB INHIBITOR EPSILON"/>
    <property type="match status" value="1"/>
</dbReference>
<dbReference type="Pfam" id="PF12796">
    <property type="entry name" value="Ank_2"/>
    <property type="match status" value="1"/>
</dbReference>
<dbReference type="SMART" id="SM00248">
    <property type="entry name" value="ANK"/>
    <property type="match status" value="2"/>
</dbReference>
<dbReference type="SUPFAM" id="SSF48403">
    <property type="entry name" value="Ankyrin repeat"/>
    <property type="match status" value="1"/>
</dbReference>
<dbReference type="PROSITE" id="PS50297">
    <property type="entry name" value="ANK_REP_REGION"/>
    <property type="match status" value="1"/>
</dbReference>
<dbReference type="PROSITE" id="PS50088">
    <property type="entry name" value="ANK_REPEAT"/>
    <property type="match status" value="1"/>
</dbReference>
<evidence type="ECO:0000250" key="1"/>
<evidence type="ECO:0000305" key="2"/>
<organismHost>
    <name type="scientific">Microplitis demolitor</name>
    <name type="common">Parasitoid wasp</name>
    <dbReference type="NCBI Taxonomy" id="69319"/>
</organismHost>
<accession>Q5I125</accession>
<comment type="function">
    <text evidence="1">Suppresses the host immune response through NF-kappa-B inactivation. Possesses ankyrin repeat domains required for NF-kappa-B binding but lacks the regulatory regions required for dissociation from NF-kappa-B and degradation. Therefore, prevents host NF-kappa-B release and subsequent activation (By similarity).</text>
</comment>
<comment type="similarity">
    <text evidence="2">Belongs to the polydnaviridae I-Kappa-B like protein family.</text>
</comment>
<protein>
    <recommendedName>
        <fullName>I-Kappa-B like protein N3</fullName>
    </recommendedName>
</protein>
<reference key="1">
    <citation type="journal article" date="2006" name="Virology">
        <title>Polydnavirus genomes reflect their dual roles as mutualists and pathogens.</title>
        <authorList>
            <person name="Webb B.A."/>
            <person name="Strand M.R."/>
            <person name="Dickey S.E."/>
            <person name="Beck M.H."/>
            <person name="Hilgarth R.S."/>
            <person name="Barney W.E."/>
            <person name="Kadash K."/>
            <person name="Kroemer J.A."/>
            <person name="Lindstrom K.G."/>
            <person name="Rattanadechakul W."/>
            <person name="Shelby K.S."/>
            <person name="Thoetkiattikul H."/>
            <person name="Turnbull M.W."/>
            <person name="Witherell R.A."/>
        </authorList>
    </citation>
    <scope>NUCLEOTIDE SEQUENCE [GENOMIC DNA]</scope>
</reference>
<name>IKBN3_MDBVW</name>
<organism>
    <name type="scientific">Microplitis demolitor bracovirus (isolate Webb)</name>
    <name type="common">MdBV</name>
    <dbReference type="NCBI Taxonomy" id="654919"/>
    <lineage>
        <taxon>Viruses</taxon>
        <taxon>Viruses incertae sedis</taxon>
        <taxon>Polydnaviriformidae</taxon>
        <taxon>Bracoviriform</taxon>
        <taxon>Microplitis demolitor bracovirus</taxon>
    </lineage>
</organism>